<proteinExistence type="inferred from homology"/>
<comment type="function">
    <text evidence="1">Catalyzes the conversion of 3-deoxy-D-arabino-heptulosonate 7-phosphate (DAHP) to dehydroquinate (DHQ).</text>
</comment>
<comment type="catalytic activity">
    <reaction evidence="1">
        <text>7-phospho-2-dehydro-3-deoxy-D-arabino-heptonate = 3-dehydroquinate + phosphate</text>
        <dbReference type="Rhea" id="RHEA:21968"/>
        <dbReference type="ChEBI" id="CHEBI:32364"/>
        <dbReference type="ChEBI" id="CHEBI:43474"/>
        <dbReference type="ChEBI" id="CHEBI:58394"/>
        <dbReference type="EC" id="4.2.3.4"/>
    </reaction>
</comment>
<comment type="cofactor">
    <cofactor evidence="1">
        <name>Co(2+)</name>
        <dbReference type="ChEBI" id="CHEBI:48828"/>
    </cofactor>
    <cofactor evidence="1">
        <name>Zn(2+)</name>
        <dbReference type="ChEBI" id="CHEBI:29105"/>
    </cofactor>
    <text evidence="1">Binds 1 divalent metal cation per subunit. Can use either Co(2+) or Zn(2+).</text>
</comment>
<comment type="cofactor">
    <cofactor evidence="1">
        <name>NAD(+)</name>
        <dbReference type="ChEBI" id="CHEBI:57540"/>
    </cofactor>
</comment>
<comment type="pathway">
    <text evidence="1">Metabolic intermediate biosynthesis; chorismate biosynthesis; chorismate from D-erythrose 4-phosphate and phosphoenolpyruvate: step 2/7.</text>
</comment>
<comment type="subcellular location">
    <subcellularLocation>
        <location evidence="1">Cytoplasm</location>
    </subcellularLocation>
</comment>
<comment type="similarity">
    <text evidence="1">Belongs to the sugar phosphate cyclases superfamily. Dehydroquinate synthase family.</text>
</comment>
<evidence type="ECO:0000255" key="1">
    <source>
        <dbReference type="HAMAP-Rule" id="MF_00110"/>
    </source>
</evidence>
<protein>
    <recommendedName>
        <fullName evidence="1">3-dehydroquinate synthase</fullName>
        <shortName evidence="1">DHQS</shortName>
        <ecNumber evidence="1">4.2.3.4</ecNumber>
    </recommendedName>
</protein>
<name>AROB_SALCH</name>
<dbReference type="EC" id="4.2.3.4" evidence="1"/>
<dbReference type="EMBL" id="AE017220">
    <property type="protein sequence ID" value="AAX67324.1"/>
    <property type="molecule type" value="Genomic_DNA"/>
</dbReference>
<dbReference type="RefSeq" id="WP_000439824.1">
    <property type="nucleotide sequence ID" value="NC_006905.1"/>
</dbReference>
<dbReference type="SMR" id="Q57IY8"/>
<dbReference type="KEGG" id="sec:SCH_3418"/>
<dbReference type="HOGENOM" id="CLU_001201_0_2_6"/>
<dbReference type="UniPathway" id="UPA00053">
    <property type="reaction ID" value="UER00085"/>
</dbReference>
<dbReference type="Proteomes" id="UP000000538">
    <property type="component" value="Chromosome"/>
</dbReference>
<dbReference type="GO" id="GO:0005737">
    <property type="term" value="C:cytoplasm"/>
    <property type="evidence" value="ECO:0007669"/>
    <property type="project" value="UniProtKB-SubCell"/>
</dbReference>
<dbReference type="GO" id="GO:0003856">
    <property type="term" value="F:3-dehydroquinate synthase activity"/>
    <property type="evidence" value="ECO:0007669"/>
    <property type="project" value="UniProtKB-UniRule"/>
</dbReference>
<dbReference type="GO" id="GO:0046872">
    <property type="term" value="F:metal ion binding"/>
    <property type="evidence" value="ECO:0007669"/>
    <property type="project" value="UniProtKB-KW"/>
</dbReference>
<dbReference type="GO" id="GO:0000166">
    <property type="term" value="F:nucleotide binding"/>
    <property type="evidence" value="ECO:0007669"/>
    <property type="project" value="UniProtKB-KW"/>
</dbReference>
<dbReference type="GO" id="GO:0008652">
    <property type="term" value="P:amino acid biosynthetic process"/>
    <property type="evidence" value="ECO:0007669"/>
    <property type="project" value="UniProtKB-KW"/>
</dbReference>
<dbReference type="GO" id="GO:0009073">
    <property type="term" value="P:aromatic amino acid family biosynthetic process"/>
    <property type="evidence" value="ECO:0007669"/>
    <property type="project" value="UniProtKB-KW"/>
</dbReference>
<dbReference type="GO" id="GO:0009423">
    <property type="term" value="P:chorismate biosynthetic process"/>
    <property type="evidence" value="ECO:0007669"/>
    <property type="project" value="UniProtKB-UniRule"/>
</dbReference>
<dbReference type="CDD" id="cd08195">
    <property type="entry name" value="DHQS"/>
    <property type="match status" value="1"/>
</dbReference>
<dbReference type="FunFam" id="1.20.1090.10:FF:000002">
    <property type="entry name" value="3-dehydroquinate synthase"/>
    <property type="match status" value="1"/>
</dbReference>
<dbReference type="FunFam" id="3.40.50.1970:FF:000001">
    <property type="entry name" value="3-dehydroquinate synthase"/>
    <property type="match status" value="1"/>
</dbReference>
<dbReference type="Gene3D" id="3.40.50.1970">
    <property type="match status" value="1"/>
</dbReference>
<dbReference type="Gene3D" id="1.20.1090.10">
    <property type="entry name" value="Dehydroquinate synthase-like - alpha domain"/>
    <property type="match status" value="1"/>
</dbReference>
<dbReference type="HAMAP" id="MF_00110">
    <property type="entry name" value="DHQ_synthase"/>
    <property type="match status" value="1"/>
</dbReference>
<dbReference type="InterPro" id="IPR050071">
    <property type="entry name" value="Dehydroquinate_synthase"/>
</dbReference>
<dbReference type="InterPro" id="IPR016037">
    <property type="entry name" value="DHQ_synth_AroB"/>
</dbReference>
<dbReference type="InterPro" id="IPR030963">
    <property type="entry name" value="DHQ_synth_fam"/>
</dbReference>
<dbReference type="InterPro" id="IPR030960">
    <property type="entry name" value="DHQS/DOIS_N"/>
</dbReference>
<dbReference type="InterPro" id="IPR056179">
    <property type="entry name" value="DHQS_C"/>
</dbReference>
<dbReference type="NCBIfam" id="TIGR01357">
    <property type="entry name" value="aroB"/>
    <property type="match status" value="1"/>
</dbReference>
<dbReference type="PANTHER" id="PTHR43622">
    <property type="entry name" value="3-DEHYDROQUINATE SYNTHASE"/>
    <property type="match status" value="1"/>
</dbReference>
<dbReference type="PANTHER" id="PTHR43622:SF7">
    <property type="entry name" value="3-DEHYDROQUINATE SYNTHASE, CHLOROPLASTIC"/>
    <property type="match status" value="1"/>
</dbReference>
<dbReference type="Pfam" id="PF01761">
    <property type="entry name" value="DHQ_synthase"/>
    <property type="match status" value="1"/>
</dbReference>
<dbReference type="Pfam" id="PF24621">
    <property type="entry name" value="DHQS_C"/>
    <property type="match status" value="1"/>
</dbReference>
<dbReference type="PIRSF" id="PIRSF001455">
    <property type="entry name" value="DHQ_synth"/>
    <property type="match status" value="1"/>
</dbReference>
<dbReference type="SUPFAM" id="SSF56796">
    <property type="entry name" value="Dehydroquinate synthase-like"/>
    <property type="match status" value="1"/>
</dbReference>
<feature type="chain" id="PRO_0000231123" description="3-dehydroquinate synthase">
    <location>
        <begin position="1"/>
        <end position="362"/>
    </location>
</feature>
<feature type="binding site" evidence="1">
    <location>
        <begin position="71"/>
        <end position="76"/>
    </location>
    <ligand>
        <name>NAD(+)</name>
        <dbReference type="ChEBI" id="CHEBI:57540"/>
    </ligand>
</feature>
<feature type="binding site" evidence="1">
    <location>
        <begin position="105"/>
        <end position="109"/>
    </location>
    <ligand>
        <name>NAD(+)</name>
        <dbReference type="ChEBI" id="CHEBI:57540"/>
    </ligand>
</feature>
<feature type="binding site" evidence="1">
    <location>
        <begin position="129"/>
        <end position="130"/>
    </location>
    <ligand>
        <name>NAD(+)</name>
        <dbReference type="ChEBI" id="CHEBI:57540"/>
    </ligand>
</feature>
<feature type="binding site" evidence="1">
    <location>
        <position position="142"/>
    </location>
    <ligand>
        <name>NAD(+)</name>
        <dbReference type="ChEBI" id="CHEBI:57540"/>
    </ligand>
</feature>
<feature type="binding site" evidence="1">
    <location>
        <position position="151"/>
    </location>
    <ligand>
        <name>NAD(+)</name>
        <dbReference type="ChEBI" id="CHEBI:57540"/>
    </ligand>
</feature>
<feature type="binding site" evidence="1">
    <location>
        <begin position="169"/>
        <end position="172"/>
    </location>
    <ligand>
        <name>NAD(+)</name>
        <dbReference type="ChEBI" id="CHEBI:57540"/>
    </ligand>
</feature>
<feature type="binding site" evidence="1">
    <location>
        <position position="184"/>
    </location>
    <ligand>
        <name>Zn(2+)</name>
        <dbReference type="ChEBI" id="CHEBI:29105"/>
    </ligand>
</feature>
<feature type="binding site" evidence="1">
    <location>
        <position position="247"/>
    </location>
    <ligand>
        <name>Zn(2+)</name>
        <dbReference type="ChEBI" id="CHEBI:29105"/>
    </ligand>
</feature>
<feature type="binding site" evidence="1">
    <location>
        <position position="264"/>
    </location>
    <ligand>
        <name>Zn(2+)</name>
        <dbReference type="ChEBI" id="CHEBI:29105"/>
    </ligand>
</feature>
<accession>Q57IY8</accession>
<gene>
    <name evidence="1" type="primary">aroB</name>
    <name type="ordered locus">SCH_3418</name>
</gene>
<reference key="1">
    <citation type="journal article" date="2005" name="Nucleic Acids Res.">
        <title>The genome sequence of Salmonella enterica serovar Choleraesuis, a highly invasive and resistant zoonotic pathogen.</title>
        <authorList>
            <person name="Chiu C.-H."/>
            <person name="Tang P."/>
            <person name="Chu C."/>
            <person name="Hu S."/>
            <person name="Bao Q."/>
            <person name="Yu J."/>
            <person name="Chou Y.-Y."/>
            <person name="Wang H.-S."/>
            <person name="Lee Y.-S."/>
        </authorList>
    </citation>
    <scope>NUCLEOTIDE SEQUENCE [LARGE SCALE GENOMIC DNA]</scope>
    <source>
        <strain>SC-B67</strain>
    </source>
</reference>
<keyword id="KW-0028">Amino-acid biosynthesis</keyword>
<keyword id="KW-0057">Aromatic amino acid biosynthesis</keyword>
<keyword id="KW-0170">Cobalt</keyword>
<keyword id="KW-0963">Cytoplasm</keyword>
<keyword id="KW-0456">Lyase</keyword>
<keyword id="KW-0479">Metal-binding</keyword>
<keyword id="KW-0520">NAD</keyword>
<keyword id="KW-0547">Nucleotide-binding</keyword>
<keyword id="KW-0862">Zinc</keyword>
<organism>
    <name type="scientific">Salmonella choleraesuis (strain SC-B67)</name>
    <dbReference type="NCBI Taxonomy" id="321314"/>
    <lineage>
        <taxon>Bacteria</taxon>
        <taxon>Pseudomonadati</taxon>
        <taxon>Pseudomonadota</taxon>
        <taxon>Gammaproteobacteria</taxon>
        <taxon>Enterobacterales</taxon>
        <taxon>Enterobacteriaceae</taxon>
        <taxon>Salmonella</taxon>
    </lineage>
</organism>
<sequence length="362" mass="38680">MERITVTLGERSYPITIAAGLFNEPASFLPLKSGDQVMLVTNETLAPLYLDKVRGVLERAGVNVDSVILPDGEQYKSLTVLDTVFTALLKKPHGRDTTLVALGGGVIGDLTGFAAASYQRGVRFIQVPTTLLSQVDSSVGGKTAVNHPLGKNMIGAFYQPASVVVDLDCLKTLPARELASGLAEVIKYGIILDADFFTWLEGNLDALLRLDGPAMAYCIRRCCELKAEVVAADEREAGLRALLNLGHTFGHAIEAEMGYGNWLHGEAVAAGIVMAARASERLGQFSSADTQRIIALLERAGLPVNGPCEMSAQDYLPHMLRDKKVLAGELRLVLPLAIGKSEVRGGVSHEVVLSAIADCQQA</sequence>